<comment type="interaction">
    <interactant intactId="EBI-15195019">
        <id>O23063</id>
    </interactant>
    <interactant intactId="EBI-15191543">
        <id>Q05153</id>
        <label>SSRP1</label>
    </interactant>
    <organismsDiffer>false</organismsDiffer>
    <experiments>3</experiments>
</comment>
<comment type="similarity">
    <text evidence="2">Belongs to the GeBP family.</text>
</comment>
<comment type="online information" name="Plant Transcription Factor Database">
    <link uri="https://planttfdb.gao-lab.org/family.php?fam=GeBP#family_intro"/>
</comment>
<accession>O23063</accession>
<accession>Q8LE85</accession>
<gene>
    <name evidence="3" type="ordered locus">At4g00390</name>
    <name evidence="4" type="ORF">F5I10.6</name>
</gene>
<evidence type="ECO:0000256" key="1">
    <source>
        <dbReference type="SAM" id="MobiDB-lite"/>
    </source>
</evidence>
<evidence type="ECO:0000305" key="2"/>
<evidence type="ECO:0000312" key="3">
    <source>
        <dbReference type="Araport" id="AT4G00390"/>
    </source>
</evidence>
<evidence type="ECO:0000312" key="4">
    <source>
        <dbReference type="EMBL" id="AAF02786.1"/>
    </source>
</evidence>
<name>STKLP_ARATH</name>
<keyword id="KW-1185">Reference proteome</keyword>
<keyword id="KW-0804">Transcription</keyword>
<keyword id="KW-0805">Transcription regulation</keyword>
<dbReference type="EMBL" id="AF013293">
    <property type="protein sequence ID" value="AAB62828.1"/>
    <property type="molecule type" value="Genomic_DNA"/>
</dbReference>
<dbReference type="EMBL" id="AF195115">
    <property type="protein sequence ID" value="AAF02786.1"/>
    <property type="molecule type" value="Genomic_DNA"/>
</dbReference>
<dbReference type="EMBL" id="AL161471">
    <property type="protein sequence ID" value="CAB80797.1"/>
    <property type="molecule type" value="Genomic_DNA"/>
</dbReference>
<dbReference type="EMBL" id="CP002687">
    <property type="protein sequence ID" value="AEE81872.1"/>
    <property type="molecule type" value="Genomic_DNA"/>
</dbReference>
<dbReference type="EMBL" id="DQ446789">
    <property type="protein sequence ID" value="ABE66038.1"/>
    <property type="molecule type" value="mRNA"/>
</dbReference>
<dbReference type="EMBL" id="AB493663">
    <property type="protein sequence ID" value="BAH30501.1"/>
    <property type="molecule type" value="mRNA"/>
</dbReference>
<dbReference type="EMBL" id="AY085566">
    <property type="protein sequence ID" value="AAM62788.1"/>
    <property type="molecule type" value="mRNA"/>
</dbReference>
<dbReference type="PIR" id="T01532">
    <property type="entry name" value="T01532"/>
</dbReference>
<dbReference type="RefSeq" id="NP_191949.1">
    <property type="nucleotide sequence ID" value="NM_116263.2"/>
</dbReference>
<dbReference type="IntAct" id="O23063">
    <property type="interactions" value="7"/>
</dbReference>
<dbReference type="STRING" id="3702.O23063"/>
<dbReference type="GlyGen" id="O23063">
    <property type="glycosylation" value="1 site"/>
</dbReference>
<dbReference type="PaxDb" id="3702-AT4G00390.1"/>
<dbReference type="ProteomicsDB" id="228420"/>
<dbReference type="EnsemblPlants" id="AT4G00390.1">
    <property type="protein sequence ID" value="AT4G00390.1"/>
    <property type="gene ID" value="AT4G00390"/>
</dbReference>
<dbReference type="GeneID" id="828200"/>
<dbReference type="Gramene" id="AT4G00390.1">
    <property type="protein sequence ID" value="AT4G00390.1"/>
    <property type="gene ID" value="AT4G00390"/>
</dbReference>
<dbReference type="KEGG" id="ath:AT4G00390"/>
<dbReference type="Araport" id="AT4G00390"/>
<dbReference type="TAIR" id="AT4G00390"/>
<dbReference type="eggNOG" id="ENOG502RQE9">
    <property type="taxonomic scope" value="Eukaryota"/>
</dbReference>
<dbReference type="HOGENOM" id="CLU_051273_0_0_1"/>
<dbReference type="InParanoid" id="O23063"/>
<dbReference type="OMA" id="CKSIWGP"/>
<dbReference type="PhylomeDB" id="O23063"/>
<dbReference type="CD-CODE" id="4299E36E">
    <property type="entry name" value="Nucleolus"/>
</dbReference>
<dbReference type="PRO" id="PR:O23063"/>
<dbReference type="Proteomes" id="UP000006548">
    <property type="component" value="Chromosome 4"/>
</dbReference>
<dbReference type="ExpressionAtlas" id="O23063">
    <property type="expression patterns" value="baseline and differential"/>
</dbReference>
<dbReference type="GO" id="GO:0005730">
    <property type="term" value="C:nucleolus"/>
    <property type="evidence" value="ECO:0007005"/>
    <property type="project" value="TAIR"/>
</dbReference>
<dbReference type="GO" id="GO:0000976">
    <property type="term" value="F:transcription cis-regulatory region binding"/>
    <property type="evidence" value="ECO:0000353"/>
    <property type="project" value="TAIR"/>
</dbReference>
<dbReference type="GO" id="GO:0006355">
    <property type="term" value="P:regulation of DNA-templated transcription"/>
    <property type="evidence" value="ECO:0000304"/>
    <property type="project" value="TAIR"/>
</dbReference>
<dbReference type="InterPro" id="IPR007592">
    <property type="entry name" value="GEBP"/>
</dbReference>
<dbReference type="InterPro" id="IPR053933">
    <property type="entry name" value="GeBP-like_C"/>
</dbReference>
<dbReference type="InterPro" id="IPR053932">
    <property type="entry name" value="GeBP-like_DBD"/>
</dbReference>
<dbReference type="PANTHER" id="PTHR31662">
    <property type="entry name" value="BNAANNG10740D PROTEIN-RELATED"/>
    <property type="match status" value="1"/>
</dbReference>
<dbReference type="PANTHER" id="PTHR31662:SF68">
    <property type="entry name" value="DNA-BINDING STOREKEEPER PROTEIN TRANSCRIPTIONAL REGULATOR-LIKE PROTEIN-RELATED"/>
    <property type="match status" value="1"/>
</dbReference>
<dbReference type="Pfam" id="PF22757">
    <property type="entry name" value="GeBP-like_C"/>
    <property type="match status" value="1"/>
</dbReference>
<dbReference type="Pfam" id="PF04504">
    <property type="entry name" value="GeBP-like_DBD"/>
    <property type="match status" value="1"/>
</dbReference>
<sequence length="364" mass="39209">MTKKLDPPTAPSSDEDDVETSEDDSSSSEEDEPIKSLPATTAAAPAKSTAVSAATPAKSTSVSAAAPSKSTAVSAAADSDSGSESETDSDSESTDPPKSGSGKTIASKKKDDPSSSTATLALPAVKSGAKRAASEAATTSTKRVKKDEESVKKPALFQRLWSDDDEISMLQGMIDYHADTGKSPSADTNAFYEFQKKSISFEVSKSQFSDKVRSLRKKYRAKEGKDEPRFVKAHDKKAFELSKFIWGPKGIALDSNAKSNGVSKKSASKTKEKLDSVKQDLAFVGVSSTNGDDWFEKSSLARMIAGSGIDEYYVRQKWSSFTLETKKIVEEKFQLMQAKELEAMLDKSVRLTDLTSYFVDASKN</sequence>
<reference key="1">
    <citation type="journal article" date="1999" name="Nature">
        <title>Sequence and analysis of chromosome 4 of the plant Arabidopsis thaliana.</title>
        <authorList>
            <person name="Mayer K.F.X."/>
            <person name="Schueller C."/>
            <person name="Wambutt R."/>
            <person name="Murphy G."/>
            <person name="Volckaert G."/>
            <person name="Pohl T."/>
            <person name="Duesterhoeft A."/>
            <person name="Stiekema W."/>
            <person name="Entian K.-D."/>
            <person name="Terryn N."/>
            <person name="Harris B."/>
            <person name="Ansorge W."/>
            <person name="Brandt P."/>
            <person name="Grivell L.A."/>
            <person name="Rieger M."/>
            <person name="Weichselgartner M."/>
            <person name="de Simone V."/>
            <person name="Obermaier B."/>
            <person name="Mache R."/>
            <person name="Mueller M."/>
            <person name="Kreis M."/>
            <person name="Delseny M."/>
            <person name="Puigdomenech P."/>
            <person name="Watson M."/>
            <person name="Schmidtheini T."/>
            <person name="Reichert B."/>
            <person name="Portetelle D."/>
            <person name="Perez-Alonso M."/>
            <person name="Boutry M."/>
            <person name="Bancroft I."/>
            <person name="Vos P."/>
            <person name="Hoheisel J."/>
            <person name="Zimmermann W."/>
            <person name="Wedler H."/>
            <person name="Ridley P."/>
            <person name="Langham S.-A."/>
            <person name="McCullagh B."/>
            <person name="Bilham L."/>
            <person name="Robben J."/>
            <person name="van der Schueren J."/>
            <person name="Grymonprez B."/>
            <person name="Chuang Y.-J."/>
            <person name="Vandenbussche F."/>
            <person name="Braeken M."/>
            <person name="Weltjens I."/>
            <person name="Voet M."/>
            <person name="Bastiaens I."/>
            <person name="Aert R."/>
            <person name="Defoor E."/>
            <person name="Weitzenegger T."/>
            <person name="Bothe G."/>
            <person name="Ramsperger U."/>
            <person name="Hilbert H."/>
            <person name="Braun M."/>
            <person name="Holzer E."/>
            <person name="Brandt A."/>
            <person name="Peters S."/>
            <person name="van Staveren M."/>
            <person name="Dirkse W."/>
            <person name="Mooijman P."/>
            <person name="Klein Lankhorst R."/>
            <person name="Rose M."/>
            <person name="Hauf J."/>
            <person name="Koetter P."/>
            <person name="Berneiser S."/>
            <person name="Hempel S."/>
            <person name="Feldpausch M."/>
            <person name="Lamberth S."/>
            <person name="Van den Daele H."/>
            <person name="De Keyser A."/>
            <person name="Buysshaert C."/>
            <person name="Gielen J."/>
            <person name="Villarroel R."/>
            <person name="De Clercq R."/>
            <person name="van Montagu M."/>
            <person name="Rogers J."/>
            <person name="Cronin A."/>
            <person name="Quail M.A."/>
            <person name="Bray-Allen S."/>
            <person name="Clark L."/>
            <person name="Doggett J."/>
            <person name="Hall S."/>
            <person name="Kay M."/>
            <person name="Lennard N."/>
            <person name="McLay K."/>
            <person name="Mayes R."/>
            <person name="Pettett A."/>
            <person name="Rajandream M.A."/>
            <person name="Lyne M."/>
            <person name="Benes V."/>
            <person name="Rechmann S."/>
            <person name="Borkova D."/>
            <person name="Bloecker H."/>
            <person name="Scharfe M."/>
            <person name="Grimm M."/>
            <person name="Loehnert T.-H."/>
            <person name="Dose S."/>
            <person name="de Haan M."/>
            <person name="Maarse A.C."/>
            <person name="Schaefer M."/>
            <person name="Mueller-Auer S."/>
            <person name="Gabel C."/>
            <person name="Fuchs M."/>
            <person name="Fartmann B."/>
            <person name="Granderath K."/>
            <person name="Dauner D."/>
            <person name="Herzl A."/>
            <person name="Neumann S."/>
            <person name="Argiriou A."/>
            <person name="Vitale D."/>
            <person name="Liguori R."/>
            <person name="Piravandi E."/>
            <person name="Massenet O."/>
            <person name="Quigley F."/>
            <person name="Clabauld G."/>
            <person name="Muendlein A."/>
            <person name="Felber R."/>
            <person name="Schnabl S."/>
            <person name="Hiller R."/>
            <person name="Schmidt W."/>
            <person name="Lecharny A."/>
            <person name="Aubourg S."/>
            <person name="Chefdor F."/>
            <person name="Cooke R."/>
            <person name="Berger C."/>
            <person name="Monfort A."/>
            <person name="Casacuberta E."/>
            <person name="Gibbons T."/>
            <person name="Weber N."/>
            <person name="Vandenbol M."/>
            <person name="Bargues M."/>
            <person name="Terol J."/>
            <person name="Torres A."/>
            <person name="Perez-Perez A."/>
            <person name="Purnelle B."/>
            <person name="Bent E."/>
            <person name="Johnson S."/>
            <person name="Tacon D."/>
            <person name="Jesse T."/>
            <person name="Heijnen L."/>
            <person name="Schwarz S."/>
            <person name="Scholler P."/>
            <person name="Heber S."/>
            <person name="Francs P."/>
            <person name="Bielke C."/>
            <person name="Frishman D."/>
            <person name="Haase D."/>
            <person name="Lemcke K."/>
            <person name="Mewes H.-W."/>
            <person name="Stocker S."/>
            <person name="Zaccaria P."/>
            <person name="Bevan M."/>
            <person name="Wilson R.K."/>
            <person name="de la Bastide M."/>
            <person name="Habermann K."/>
            <person name="Parnell L."/>
            <person name="Dedhia N."/>
            <person name="Gnoj L."/>
            <person name="Schutz K."/>
            <person name="Huang E."/>
            <person name="Spiegel L."/>
            <person name="Sekhon M."/>
            <person name="Murray J."/>
            <person name="Sheet P."/>
            <person name="Cordes M."/>
            <person name="Abu-Threideh J."/>
            <person name="Stoneking T."/>
            <person name="Kalicki J."/>
            <person name="Graves T."/>
            <person name="Harmon G."/>
            <person name="Edwards J."/>
            <person name="Latreille P."/>
            <person name="Courtney L."/>
            <person name="Cloud J."/>
            <person name="Abbott A."/>
            <person name="Scott K."/>
            <person name="Johnson D."/>
            <person name="Minx P."/>
            <person name="Bentley D."/>
            <person name="Fulton B."/>
            <person name="Miller N."/>
            <person name="Greco T."/>
            <person name="Kemp K."/>
            <person name="Kramer J."/>
            <person name="Fulton L."/>
            <person name="Mardis E."/>
            <person name="Dante M."/>
            <person name="Pepin K."/>
            <person name="Hillier L.W."/>
            <person name="Nelson J."/>
            <person name="Spieth J."/>
            <person name="Ryan E."/>
            <person name="Andrews S."/>
            <person name="Geisel C."/>
            <person name="Layman D."/>
            <person name="Du H."/>
            <person name="Ali J."/>
            <person name="Berghoff A."/>
            <person name="Jones K."/>
            <person name="Drone K."/>
            <person name="Cotton M."/>
            <person name="Joshu C."/>
            <person name="Antonoiu B."/>
            <person name="Zidanic M."/>
            <person name="Strong C."/>
            <person name="Sun H."/>
            <person name="Lamar B."/>
            <person name="Yordan C."/>
            <person name="Ma P."/>
            <person name="Zhong J."/>
            <person name="Preston R."/>
            <person name="Vil D."/>
            <person name="Shekher M."/>
            <person name="Matero A."/>
            <person name="Shah R."/>
            <person name="Swaby I.K."/>
            <person name="O'Shaughnessy A."/>
            <person name="Rodriguez M."/>
            <person name="Hoffman J."/>
            <person name="Till S."/>
            <person name="Granat S."/>
            <person name="Shohdy N."/>
            <person name="Hasegawa A."/>
            <person name="Hameed A."/>
            <person name="Lodhi M."/>
            <person name="Johnson A."/>
            <person name="Chen E."/>
            <person name="Marra M.A."/>
            <person name="Martienssen R."/>
            <person name="McCombie W.R."/>
        </authorList>
    </citation>
    <scope>NUCLEOTIDE SEQUENCE [LARGE SCALE GENOMIC DNA]</scope>
    <source>
        <strain>cv. Columbia</strain>
    </source>
</reference>
<reference key="2">
    <citation type="journal article" date="2017" name="Plant J.">
        <title>Araport11: a complete reannotation of the Arabidopsis thaliana reference genome.</title>
        <authorList>
            <person name="Cheng C.Y."/>
            <person name="Krishnakumar V."/>
            <person name="Chan A.P."/>
            <person name="Thibaud-Nissen F."/>
            <person name="Schobel S."/>
            <person name="Town C.D."/>
        </authorList>
    </citation>
    <scope>GENOME REANNOTATION</scope>
    <source>
        <strain>cv. Columbia</strain>
    </source>
</reference>
<reference key="3">
    <citation type="journal article" date="2006" name="Plant Biotechnol. J.">
        <title>Simultaneous high-throughput recombinational cloning of open reading frames in closed and open configurations.</title>
        <authorList>
            <person name="Underwood B.A."/>
            <person name="Vanderhaeghen R."/>
            <person name="Whitford R."/>
            <person name="Town C.D."/>
            <person name="Hilson P."/>
        </authorList>
    </citation>
    <scope>NUCLEOTIDE SEQUENCE [LARGE SCALE MRNA]</scope>
    <source>
        <strain>cv. Columbia</strain>
    </source>
</reference>
<reference key="4">
    <citation type="submission" date="2009-03" db="EMBL/GenBank/DDBJ databases">
        <title>ORF cloning and analysis of Arabidopsis transcription factor genes.</title>
        <authorList>
            <person name="Fujita M."/>
            <person name="Mizukado S."/>
            <person name="Seki M."/>
            <person name="Shinozaki K."/>
            <person name="Mitsuda N."/>
            <person name="Takiguchi Y."/>
            <person name="Takagi M."/>
        </authorList>
    </citation>
    <scope>NUCLEOTIDE SEQUENCE [LARGE SCALE MRNA]</scope>
</reference>
<reference key="5">
    <citation type="submission" date="2002-03" db="EMBL/GenBank/DDBJ databases">
        <title>Full-length cDNA from Arabidopsis thaliana.</title>
        <authorList>
            <person name="Brover V.V."/>
            <person name="Troukhan M.E."/>
            <person name="Alexandrov N.A."/>
            <person name="Lu Y.-P."/>
            <person name="Flavell R.B."/>
            <person name="Feldmann K.A."/>
        </authorList>
    </citation>
    <scope>NUCLEOTIDE SEQUENCE [LARGE SCALE MRNA]</scope>
</reference>
<reference key="6">
    <citation type="journal article" date="2003" name="Plant J.">
        <title>GeBP, the first member of a new gene family in Arabidopsis, encodes a nuclear protein with DNA-binding activity and is regulated by KNAT1.</title>
        <authorList>
            <person name="Curaba J."/>
            <person name="Herzog M."/>
            <person name="Vachon G."/>
        </authorList>
    </citation>
    <scope>GENE FAMILY</scope>
</reference>
<reference key="7">
    <citation type="journal article" date="2016" name="Plant Physiol. Biochem.">
        <title>Regulation of Arabidopsis thaliana plasma membrane glucose-responsive regulator (AtPGR) expression by A. thaliana storekeeper-like transcription factor, AtSTKL, modulates glucose response in Arabidopsis.</title>
        <authorList>
            <person name="Chung M.S."/>
            <person name="Lee S."/>
            <person name="Min J.H."/>
            <person name="Huang P."/>
            <person name="Ju H.W."/>
            <person name="Kim C.S."/>
        </authorList>
    </citation>
    <scope>GENE FAMILY</scope>
</reference>
<organism>
    <name type="scientific">Arabidopsis thaliana</name>
    <name type="common">Mouse-ear cress</name>
    <dbReference type="NCBI Taxonomy" id="3702"/>
    <lineage>
        <taxon>Eukaryota</taxon>
        <taxon>Viridiplantae</taxon>
        <taxon>Streptophyta</taxon>
        <taxon>Embryophyta</taxon>
        <taxon>Tracheophyta</taxon>
        <taxon>Spermatophyta</taxon>
        <taxon>Magnoliopsida</taxon>
        <taxon>eudicotyledons</taxon>
        <taxon>Gunneridae</taxon>
        <taxon>Pentapetalae</taxon>
        <taxon>rosids</taxon>
        <taxon>malvids</taxon>
        <taxon>Brassicales</taxon>
        <taxon>Brassicaceae</taxon>
        <taxon>Camelineae</taxon>
        <taxon>Arabidopsis</taxon>
    </lineage>
</organism>
<proteinExistence type="evidence at protein level"/>
<feature type="chain" id="PRO_0000436990" description="Probable transcription factor At4g00390">
    <location>
        <begin position="1"/>
        <end position="364"/>
    </location>
</feature>
<feature type="region of interest" description="Disordered" evidence="1">
    <location>
        <begin position="1"/>
        <end position="149"/>
    </location>
</feature>
<feature type="compositionally biased region" description="Acidic residues" evidence="1">
    <location>
        <begin position="13"/>
        <end position="32"/>
    </location>
</feature>
<feature type="compositionally biased region" description="Low complexity" evidence="1">
    <location>
        <begin position="39"/>
        <end position="80"/>
    </location>
</feature>
<feature type="compositionally biased region" description="Acidic residues" evidence="1">
    <location>
        <begin position="81"/>
        <end position="93"/>
    </location>
</feature>
<feature type="sequence conflict" description="In Ref. 5; AAM62788." evidence="2" ref="5">
    <original>S</original>
    <variation>A</variation>
    <location>
        <position position="61"/>
    </location>
</feature>
<feature type="sequence conflict" description="In Ref. 5; AAM62788." evidence="2" ref="5">
    <original>D</original>
    <variation>E</variation>
    <location>
        <position position="111"/>
    </location>
</feature>
<feature type="sequence conflict" description="In Ref. 5; AAM62788." evidence="2" ref="5">
    <original>T</original>
    <variation>S</variation>
    <location>
        <position position="117"/>
    </location>
</feature>
<feature type="sequence conflict" description="In Ref. 5; AAM62788." evidence="2" ref="5">
    <original>E</original>
    <variation>V</variation>
    <location>
        <position position="240"/>
    </location>
</feature>
<feature type="sequence conflict" description="In Ref. 5; AAM62788." evidence="2" ref="5">
    <original>S</original>
    <variation>N</variation>
    <location>
        <position position="266"/>
    </location>
</feature>
<feature type="sequence conflict" description="In Ref. 5; AAM62788." evidence="2" ref="5">
    <original>MLDKS</original>
    <variation>KLEKN</variation>
    <location>
        <begin position="344"/>
        <end position="348"/>
    </location>
</feature>
<protein>
    <recommendedName>
        <fullName evidence="2">Probable transcription factor At4g00390</fullName>
    </recommendedName>
    <alternativeName>
        <fullName evidence="2">Storekeeper-like protein At4g00390</fullName>
    </alternativeName>
</protein>